<dbReference type="EMBL" id="AP008937">
    <property type="protein sequence ID" value="BAG27833.1"/>
    <property type="molecule type" value="Genomic_DNA"/>
</dbReference>
<dbReference type="RefSeq" id="WP_012391592.1">
    <property type="nucleotide sequence ID" value="NC_010610.1"/>
</dbReference>
<dbReference type="SMR" id="B2GDV1"/>
<dbReference type="KEGG" id="lfe:LAF_1497"/>
<dbReference type="eggNOG" id="COG1841">
    <property type="taxonomic scope" value="Bacteria"/>
</dbReference>
<dbReference type="HOGENOM" id="CLU_131047_2_1_9"/>
<dbReference type="Proteomes" id="UP000001697">
    <property type="component" value="Chromosome"/>
</dbReference>
<dbReference type="GO" id="GO:0022625">
    <property type="term" value="C:cytosolic large ribosomal subunit"/>
    <property type="evidence" value="ECO:0007669"/>
    <property type="project" value="TreeGrafter"/>
</dbReference>
<dbReference type="GO" id="GO:0003735">
    <property type="term" value="F:structural constituent of ribosome"/>
    <property type="evidence" value="ECO:0007669"/>
    <property type="project" value="InterPro"/>
</dbReference>
<dbReference type="GO" id="GO:0006412">
    <property type="term" value="P:translation"/>
    <property type="evidence" value="ECO:0007669"/>
    <property type="project" value="UniProtKB-UniRule"/>
</dbReference>
<dbReference type="CDD" id="cd01658">
    <property type="entry name" value="Ribosomal_L30"/>
    <property type="match status" value="1"/>
</dbReference>
<dbReference type="Gene3D" id="3.30.1390.20">
    <property type="entry name" value="Ribosomal protein L30, ferredoxin-like fold domain"/>
    <property type="match status" value="1"/>
</dbReference>
<dbReference type="HAMAP" id="MF_01371_B">
    <property type="entry name" value="Ribosomal_uL30_B"/>
    <property type="match status" value="1"/>
</dbReference>
<dbReference type="InterPro" id="IPR036919">
    <property type="entry name" value="Ribo_uL30_ferredoxin-like_sf"/>
</dbReference>
<dbReference type="InterPro" id="IPR005996">
    <property type="entry name" value="Ribosomal_uL30_bac-type"/>
</dbReference>
<dbReference type="InterPro" id="IPR016082">
    <property type="entry name" value="Ribosomal_uL30_ferredoxin-like"/>
</dbReference>
<dbReference type="NCBIfam" id="TIGR01308">
    <property type="entry name" value="rpmD_bact"/>
    <property type="match status" value="1"/>
</dbReference>
<dbReference type="PANTHER" id="PTHR15892:SF2">
    <property type="entry name" value="LARGE RIBOSOMAL SUBUNIT PROTEIN UL30M"/>
    <property type="match status" value="1"/>
</dbReference>
<dbReference type="PANTHER" id="PTHR15892">
    <property type="entry name" value="MITOCHONDRIAL RIBOSOMAL PROTEIN L30"/>
    <property type="match status" value="1"/>
</dbReference>
<dbReference type="Pfam" id="PF00327">
    <property type="entry name" value="Ribosomal_L30"/>
    <property type="match status" value="1"/>
</dbReference>
<dbReference type="PIRSF" id="PIRSF002211">
    <property type="entry name" value="Ribosomal_L30_bac-type"/>
    <property type="match status" value="1"/>
</dbReference>
<dbReference type="SUPFAM" id="SSF55129">
    <property type="entry name" value="Ribosomal protein L30p/L7e"/>
    <property type="match status" value="1"/>
</dbReference>
<evidence type="ECO:0000255" key="1">
    <source>
        <dbReference type="HAMAP-Rule" id="MF_01371"/>
    </source>
</evidence>
<evidence type="ECO:0000305" key="2"/>
<sequence length="60" mass="6572">MAKVKVTLIRSVTHRQPTQRRTVKALGLGKLHSSVILPDNAATRGAIFKVAHLVSIEEVK</sequence>
<reference key="1">
    <citation type="journal article" date="2008" name="DNA Res.">
        <title>Comparative genome analysis of Lactobacillus reuteri and Lactobacillus fermentum reveal a genomic island for reuterin and cobalamin production.</title>
        <authorList>
            <person name="Morita H."/>
            <person name="Toh H."/>
            <person name="Fukuda S."/>
            <person name="Horikawa H."/>
            <person name="Oshima K."/>
            <person name="Suzuki T."/>
            <person name="Murakami M."/>
            <person name="Hisamatsu S."/>
            <person name="Kato Y."/>
            <person name="Takizawa T."/>
            <person name="Fukuoka H."/>
            <person name="Yoshimura T."/>
            <person name="Itoh K."/>
            <person name="O'Sullivan D.J."/>
            <person name="McKay L.L."/>
            <person name="Ohno H."/>
            <person name="Kikuchi J."/>
            <person name="Masaoka T."/>
            <person name="Hattori M."/>
        </authorList>
    </citation>
    <scope>NUCLEOTIDE SEQUENCE [LARGE SCALE GENOMIC DNA]</scope>
    <source>
        <strain>NBRC 3956 / LMG 18251</strain>
    </source>
</reference>
<comment type="subunit">
    <text evidence="1">Part of the 50S ribosomal subunit.</text>
</comment>
<comment type="similarity">
    <text evidence="1">Belongs to the universal ribosomal protein uL30 family.</text>
</comment>
<keyword id="KW-1185">Reference proteome</keyword>
<keyword id="KW-0687">Ribonucleoprotein</keyword>
<keyword id="KW-0689">Ribosomal protein</keyword>
<name>RL30_LIMF3</name>
<protein>
    <recommendedName>
        <fullName evidence="1">Large ribosomal subunit protein uL30</fullName>
    </recommendedName>
    <alternativeName>
        <fullName evidence="2">50S ribosomal protein L30</fullName>
    </alternativeName>
</protein>
<gene>
    <name evidence="1" type="primary">rpmD</name>
    <name type="ordered locus">LAF_1497</name>
</gene>
<proteinExistence type="inferred from homology"/>
<accession>B2GDV1</accession>
<organism>
    <name type="scientific">Limosilactobacillus fermentum (strain NBRC 3956 / LMG 18251)</name>
    <name type="common">Lactobacillus fermentum</name>
    <dbReference type="NCBI Taxonomy" id="334390"/>
    <lineage>
        <taxon>Bacteria</taxon>
        <taxon>Bacillati</taxon>
        <taxon>Bacillota</taxon>
        <taxon>Bacilli</taxon>
        <taxon>Lactobacillales</taxon>
        <taxon>Lactobacillaceae</taxon>
        <taxon>Limosilactobacillus</taxon>
    </lineage>
</organism>
<feature type="chain" id="PRO_1000144693" description="Large ribosomal subunit protein uL30">
    <location>
        <begin position="1"/>
        <end position="60"/>
    </location>
</feature>